<dbReference type="EC" id="2.5.1.145" evidence="1"/>
<dbReference type="EMBL" id="CP001111">
    <property type="protein sequence ID" value="ACF50366.1"/>
    <property type="molecule type" value="Genomic_DNA"/>
</dbReference>
<dbReference type="RefSeq" id="WP_004144483.1">
    <property type="nucleotide sequence ID" value="NC_011071.1"/>
</dbReference>
<dbReference type="SMR" id="B4SK34"/>
<dbReference type="STRING" id="391008.Smal_0661"/>
<dbReference type="KEGG" id="smt:Smal_0661"/>
<dbReference type="eggNOG" id="COG0682">
    <property type="taxonomic scope" value="Bacteria"/>
</dbReference>
<dbReference type="HOGENOM" id="CLU_013386_1_0_6"/>
<dbReference type="OrthoDB" id="871140at2"/>
<dbReference type="UniPathway" id="UPA00664"/>
<dbReference type="Proteomes" id="UP000001867">
    <property type="component" value="Chromosome"/>
</dbReference>
<dbReference type="GO" id="GO:0005886">
    <property type="term" value="C:plasma membrane"/>
    <property type="evidence" value="ECO:0007669"/>
    <property type="project" value="UniProtKB-SubCell"/>
</dbReference>
<dbReference type="GO" id="GO:0008961">
    <property type="term" value="F:phosphatidylglycerol-prolipoprotein diacylglyceryl transferase activity"/>
    <property type="evidence" value="ECO:0007669"/>
    <property type="project" value="UniProtKB-UniRule"/>
</dbReference>
<dbReference type="GO" id="GO:0042158">
    <property type="term" value="P:lipoprotein biosynthetic process"/>
    <property type="evidence" value="ECO:0007669"/>
    <property type="project" value="UniProtKB-UniRule"/>
</dbReference>
<dbReference type="HAMAP" id="MF_01147">
    <property type="entry name" value="Lgt"/>
    <property type="match status" value="1"/>
</dbReference>
<dbReference type="InterPro" id="IPR001640">
    <property type="entry name" value="Lgt"/>
</dbReference>
<dbReference type="NCBIfam" id="TIGR00544">
    <property type="entry name" value="lgt"/>
    <property type="match status" value="1"/>
</dbReference>
<dbReference type="PANTHER" id="PTHR30589:SF0">
    <property type="entry name" value="PHOSPHATIDYLGLYCEROL--PROLIPOPROTEIN DIACYLGLYCERYL TRANSFERASE"/>
    <property type="match status" value="1"/>
</dbReference>
<dbReference type="PANTHER" id="PTHR30589">
    <property type="entry name" value="PROLIPOPROTEIN DIACYLGLYCERYL TRANSFERASE"/>
    <property type="match status" value="1"/>
</dbReference>
<dbReference type="Pfam" id="PF01790">
    <property type="entry name" value="LGT"/>
    <property type="match status" value="1"/>
</dbReference>
<dbReference type="PROSITE" id="PS01311">
    <property type="entry name" value="LGT"/>
    <property type="match status" value="1"/>
</dbReference>
<protein>
    <recommendedName>
        <fullName evidence="1">Phosphatidylglycerol--prolipoprotein diacylglyceryl transferase</fullName>
        <ecNumber evidence="1">2.5.1.145</ecNumber>
    </recommendedName>
</protein>
<accession>B4SK34</accession>
<keyword id="KW-0997">Cell inner membrane</keyword>
<keyword id="KW-1003">Cell membrane</keyword>
<keyword id="KW-0472">Membrane</keyword>
<keyword id="KW-0808">Transferase</keyword>
<keyword id="KW-0812">Transmembrane</keyword>
<keyword id="KW-1133">Transmembrane helix</keyword>
<organism>
    <name type="scientific">Stenotrophomonas maltophilia (strain R551-3)</name>
    <dbReference type="NCBI Taxonomy" id="391008"/>
    <lineage>
        <taxon>Bacteria</taxon>
        <taxon>Pseudomonadati</taxon>
        <taxon>Pseudomonadota</taxon>
        <taxon>Gammaproteobacteria</taxon>
        <taxon>Lysobacterales</taxon>
        <taxon>Lysobacteraceae</taxon>
        <taxon>Stenotrophomonas</taxon>
        <taxon>Stenotrophomonas maltophilia group</taxon>
    </lineage>
</organism>
<proteinExistence type="inferred from homology"/>
<sequence length="295" mass="32780">MIYFHDIDPIALSLGPIKVHWYGIMYLLGFTAAWLLGRKRIADGRLPGVDANGFSDLLFYAMLGVVLGGRIGYMLFYALGDFLHNPLLLFKVWDGGMSFHGGLLGVIAACWWWSRKHKLHFFDTMDFMAPLVPLGLGFGRIGNFIGAELWGKYTDGSWGVVFPSGLPAPLNQLDHATLQAQFATGALNQFARHPSQLYEALLEGLVMFVVLWAVSAKPRHRYLVGGLFALMYGLFRFAVEFVRMPDNGVYVAFDWLTRGQILSLPLIAFGLVLLVMSRRAPVLQPQLPVAAEGKA</sequence>
<name>LGT_STRM5</name>
<evidence type="ECO:0000255" key="1">
    <source>
        <dbReference type="HAMAP-Rule" id="MF_01147"/>
    </source>
</evidence>
<reference key="1">
    <citation type="submission" date="2008-06" db="EMBL/GenBank/DDBJ databases">
        <title>Complete sequence of Stenotrophomonas maltophilia R551-3.</title>
        <authorList>
            <consortium name="US DOE Joint Genome Institute"/>
            <person name="Lucas S."/>
            <person name="Copeland A."/>
            <person name="Lapidus A."/>
            <person name="Glavina del Rio T."/>
            <person name="Dalin E."/>
            <person name="Tice H."/>
            <person name="Pitluck S."/>
            <person name="Chain P."/>
            <person name="Malfatti S."/>
            <person name="Shin M."/>
            <person name="Vergez L."/>
            <person name="Lang D."/>
            <person name="Schmutz J."/>
            <person name="Larimer F."/>
            <person name="Land M."/>
            <person name="Hauser L."/>
            <person name="Kyrpides N."/>
            <person name="Mikhailova N."/>
            <person name="Taghavi S."/>
            <person name="Monchy S."/>
            <person name="Newman L."/>
            <person name="Vangronsveld J."/>
            <person name="van der Lelie D."/>
            <person name="Richardson P."/>
        </authorList>
    </citation>
    <scope>NUCLEOTIDE SEQUENCE [LARGE SCALE GENOMIC DNA]</scope>
    <source>
        <strain>R551-3</strain>
    </source>
</reference>
<gene>
    <name evidence="1" type="primary">lgt</name>
    <name type="ordered locus">Smal_0661</name>
</gene>
<comment type="function">
    <text evidence="1">Catalyzes the transfer of the diacylglyceryl group from phosphatidylglycerol to the sulfhydryl group of the N-terminal cysteine of a prolipoprotein, the first step in the formation of mature lipoproteins.</text>
</comment>
<comment type="catalytic activity">
    <reaction evidence="1">
        <text>L-cysteinyl-[prolipoprotein] + a 1,2-diacyl-sn-glycero-3-phospho-(1'-sn-glycerol) = an S-1,2-diacyl-sn-glyceryl-L-cysteinyl-[prolipoprotein] + sn-glycerol 1-phosphate + H(+)</text>
        <dbReference type="Rhea" id="RHEA:56712"/>
        <dbReference type="Rhea" id="RHEA-COMP:14679"/>
        <dbReference type="Rhea" id="RHEA-COMP:14680"/>
        <dbReference type="ChEBI" id="CHEBI:15378"/>
        <dbReference type="ChEBI" id="CHEBI:29950"/>
        <dbReference type="ChEBI" id="CHEBI:57685"/>
        <dbReference type="ChEBI" id="CHEBI:64716"/>
        <dbReference type="ChEBI" id="CHEBI:140658"/>
        <dbReference type="EC" id="2.5.1.145"/>
    </reaction>
</comment>
<comment type="pathway">
    <text evidence="1">Protein modification; lipoprotein biosynthesis (diacylglyceryl transfer).</text>
</comment>
<comment type="subcellular location">
    <subcellularLocation>
        <location evidence="1">Cell inner membrane</location>
        <topology evidence="1">Multi-pass membrane protein</topology>
    </subcellularLocation>
</comment>
<comment type="similarity">
    <text evidence="1">Belongs to the Lgt family.</text>
</comment>
<feature type="chain" id="PRO_1000137462" description="Phosphatidylglycerol--prolipoprotein diacylglyceryl transferase">
    <location>
        <begin position="1"/>
        <end position="295"/>
    </location>
</feature>
<feature type="transmembrane region" description="Helical" evidence="1">
    <location>
        <begin position="17"/>
        <end position="37"/>
    </location>
</feature>
<feature type="transmembrane region" description="Helical" evidence="1">
    <location>
        <begin position="57"/>
        <end position="77"/>
    </location>
</feature>
<feature type="transmembrane region" description="Helical" evidence="1">
    <location>
        <begin position="92"/>
        <end position="112"/>
    </location>
</feature>
<feature type="transmembrane region" description="Helical" evidence="1">
    <location>
        <begin position="127"/>
        <end position="147"/>
    </location>
</feature>
<feature type="transmembrane region" description="Helical" evidence="1">
    <location>
        <begin position="196"/>
        <end position="216"/>
    </location>
</feature>
<feature type="transmembrane region" description="Helical" evidence="1">
    <location>
        <begin position="222"/>
        <end position="242"/>
    </location>
</feature>
<feature type="transmembrane region" description="Helical" evidence="1">
    <location>
        <begin position="255"/>
        <end position="275"/>
    </location>
</feature>
<feature type="binding site" evidence="1">
    <location>
        <position position="140"/>
    </location>
    <ligand>
        <name>a 1,2-diacyl-sn-glycero-3-phospho-(1'-sn-glycerol)</name>
        <dbReference type="ChEBI" id="CHEBI:64716"/>
    </ligand>
</feature>